<reference key="1">
    <citation type="submission" date="2006-12" db="EMBL/GenBank/DDBJ databases">
        <title>Complete sequence of Acidovorax avenae subsp. citrulli AAC00-1.</title>
        <authorList>
            <person name="Copeland A."/>
            <person name="Lucas S."/>
            <person name="Lapidus A."/>
            <person name="Barry K."/>
            <person name="Detter J.C."/>
            <person name="Glavina del Rio T."/>
            <person name="Dalin E."/>
            <person name="Tice H."/>
            <person name="Pitluck S."/>
            <person name="Kiss H."/>
            <person name="Brettin T."/>
            <person name="Bruce D."/>
            <person name="Han C."/>
            <person name="Tapia R."/>
            <person name="Gilna P."/>
            <person name="Schmutz J."/>
            <person name="Larimer F."/>
            <person name="Land M."/>
            <person name="Hauser L."/>
            <person name="Kyrpides N."/>
            <person name="Kim E."/>
            <person name="Stahl D."/>
            <person name="Richardson P."/>
        </authorList>
    </citation>
    <scope>NUCLEOTIDE SEQUENCE [LARGE SCALE GENOMIC DNA]</scope>
    <source>
        <strain>AAC00-1</strain>
    </source>
</reference>
<organism>
    <name type="scientific">Paracidovorax citrulli (strain AAC00-1)</name>
    <name type="common">Acidovorax citrulli</name>
    <dbReference type="NCBI Taxonomy" id="397945"/>
    <lineage>
        <taxon>Bacteria</taxon>
        <taxon>Pseudomonadati</taxon>
        <taxon>Pseudomonadota</taxon>
        <taxon>Betaproteobacteria</taxon>
        <taxon>Burkholderiales</taxon>
        <taxon>Comamonadaceae</taxon>
        <taxon>Paracidovorax</taxon>
    </lineage>
</organism>
<evidence type="ECO:0000255" key="1">
    <source>
        <dbReference type="HAMAP-Rule" id="MF_01343"/>
    </source>
</evidence>
<evidence type="ECO:0000305" key="2"/>
<proteinExistence type="inferred from homology"/>
<protein>
    <recommendedName>
        <fullName evidence="1">Small ribosomal subunit protein uS15</fullName>
    </recommendedName>
    <alternativeName>
        <fullName evidence="2">30S ribosomal protein S15</fullName>
    </alternativeName>
</protein>
<comment type="function">
    <text evidence="1">One of the primary rRNA binding proteins, it binds directly to 16S rRNA where it helps nucleate assembly of the platform of the 30S subunit by binding and bridging several RNA helices of the 16S rRNA.</text>
</comment>
<comment type="function">
    <text evidence="1">Forms an intersubunit bridge (bridge B4) with the 23S rRNA of the 50S subunit in the ribosome.</text>
</comment>
<comment type="subunit">
    <text evidence="1">Part of the 30S ribosomal subunit. Forms a bridge to the 50S subunit in the 70S ribosome, contacting the 23S rRNA.</text>
</comment>
<comment type="similarity">
    <text evidence="1">Belongs to the universal ribosomal protein uS15 family.</text>
</comment>
<dbReference type="EMBL" id="CP000512">
    <property type="protein sequence ID" value="ABM31849.1"/>
    <property type="molecule type" value="Genomic_DNA"/>
</dbReference>
<dbReference type="RefSeq" id="WP_011794401.1">
    <property type="nucleotide sequence ID" value="NC_008752.1"/>
</dbReference>
<dbReference type="SMR" id="A1TLL1"/>
<dbReference type="STRING" id="397945.Aave_1258"/>
<dbReference type="GeneID" id="79790920"/>
<dbReference type="KEGG" id="aav:Aave_1258"/>
<dbReference type="eggNOG" id="COG0184">
    <property type="taxonomic scope" value="Bacteria"/>
</dbReference>
<dbReference type="HOGENOM" id="CLU_148518_0_0_4"/>
<dbReference type="OrthoDB" id="9799262at2"/>
<dbReference type="Proteomes" id="UP000002596">
    <property type="component" value="Chromosome"/>
</dbReference>
<dbReference type="GO" id="GO:0022627">
    <property type="term" value="C:cytosolic small ribosomal subunit"/>
    <property type="evidence" value="ECO:0007669"/>
    <property type="project" value="TreeGrafter"/>
</dbReference>
<dbReference type="GO" id="GO:0019843">
    <property type="term" value="F:rRNA binding"/>
    <property type="evidence" value="ECO:0007669"/>
    <property type="project" value="UniProtKB-UniRule"/>
</dbReference>
<dbReference type="GO" id="GO:0003735">
    <property type="term" value="F:structural constituent of ribosome"/>
    <property type="evidence" value="ECO:0007669"/>
    <property type="project" value="InterPro"/>
</dbReference>
<dbReference type="GO" id="GO:0006412">
    <property type="term" value="P:translation"/>
    <property type="evidence" value="ECO:0007669"/>
    <property type="project" value="UniProtKB-UniRule"/>
</dbReference>
<dbReference type="CDD" id="cd00353">
    <property type="entry name" value="Ribosomal_S15p_S13e"/>
    <property type="match status" value="1"/>
</dbReference>
<dbReference type="FunFam" id="1.10.287.10:FF:000002">
    <property type="entry name" value="30S ribosomal protein S15"/>
    <property type="match status" value="1"/>
</dbReference>
<dbReference type="Gene3D" id="6.10.250.3130">
    <property type="match status" value="1"/>
</dbReference>
<dbReference type="Gene3D" id="1.10.287.10">
    <property type="entry name" value="S15/NS1, RNA-binding"/>
    <property type="match status" value="1"/>
</dbReference>
<dbReference type="HAMAP" id="MF_01343_B">
    <property type="entry name" value="Ribosomal_uS15_B"/>
    <property type="match status" value="1"/>
</dbReference>
<dbReference type="InterPro" id="IPR000589">
    <property type="entry name" value="Ribosomal_uS15"/>
</dbReference>
<dbReference type="InterPro" id="IPR005290">
    <property type="entry name" value="Ribosomal_uS15_bac-type"/>
</dbReference>
<dbReference type="InterPro" id="IPR009068">
    <property type="entry name" value="uS15_NS1_RNA-bd_sf"/>
</dbReference>
<dbReference type="NCBIfam" id="TIGR00952">
    <property type="entry name" value="S15_bact"/>
    <property type="match status" value="1"/>
</dbReference>
<dbReference type="PANTHER" id="PTHR23321">
    <property type="entry name" value="RIBOSOMAL PROTEIN S15, BACTERIAL AND ORGANELLAR"/>
    <property type="match status" value="1"/>
</dbReference>
<dbReference type="PANTHER" id="PTHR23321:SF26">
    <property type="entry name" value="SMALL RIBOSOMAL SUBUNIT PROTEIN US15M"/>
    <property type="match status" value="1"/>
</dbReference>
<dbReference type="Pfam" id="PF00312">
    <property type="entry name" value="Ribosomal_S15"/>
    <property type="match status" value="1"/>
</dbReference>
<dbReference type="SMART" id="SM01387">
    <property type="entry name" value="Ribosomal_S15"/>
    <property type="match status" value="1"/>
</dbReference>
<dbReference type="SUPFAM" id="SSF47060">
    <property type="entry name" value="S15/NS1 RNA-binding domain"/>
    <property type="match status" value="1"/>
</dbReference>
<dbReference type="PROSITE" id="PS00362">
    <property type="entry name" value="RIBOSOMAL_S15"/>
    <property type="match status" value="1"/>
</dbReference>
<accession>A1TLL1</accession>
<keyword id="KW-0687">Ribonucleoprotein</keyword>
<keyword id="KW-0689">Ribosomal protein</keyword>
<keyword id="KW-0694">RNA-binding</keyword>
<keyword id="KW-0699">rRNA-binding</keyword>
<sequence length="88" mass="9916">MIASSVKAEVIKDNARAANDTGSPEVQVALLTARINELTPHFKQHAKDHHGRRGLLRMVSRRRKLLDYLKAKDADRYTALIAKLGLRK</sequence>
<gene>
    <name evidence="1" type="primary">rpsO</name>
    <name type="ordered locus">Aave_1258</name>
</gene>
<name>RS15_PARC0</name>
<feature type="chain" id="PRO_1000054736" description="Small ribosomal subunit protein uS15">
    <location>
        <begin position="1"/>
        <end position="88"/>
    </location>
</feature>